<name>RS4_PERMH</name>
<sequence length="205" mass="23979">MGRYLGPLTKVSRRLGVFVGGSLKAFQKRNFPPGQHGRVQGRKVKLSDYAIRLQEKQKLRYLYGGIREKQFKRYFDEAARSAGNTGQILLQLLERRLDNVVYRLGFAKTRRQARQLVRHGHFLVNGRKVDIPSYRVDPGDIIELREKSRNSPLFKENLESRDPRSIPNWLELDKENFRGKVLEIPQEIELEIPVNVQLIIEFYSM</sequence>
<proteinExistence type="inferred from homology"/>
<accession>C0QQQ0</accession>
<dbReference type="EMBL" id="CP001230">
    <property type="protein sequence ID" value="ACO03188.1"/>
    <property type="molecule type" value="Genomic_DNA"/>
</dbReference>
<dbReference type="RefSeq" id="WP_012675427.1">
    <property type="nucleotide sequence ID" value="NC_012440.1"/>
</dbReference>
<dbReference type="SMR" id="C0QQQ0"/>
<dbReference type="STRING" id="123214.PERMA_1223"/>
<dbReference type="PaxDb" id="123214-PERMA_1223"/>
<dbReference type="KEGG" id="pmx:PERMA_1223"/>
<dbReference type="eggNOG" id="COG0522">
    <property type="taxonomic scope" value="Bacteria"/>
</dbReference>
<dbReference type="HOGENOM" id="CLU_092403_0_1_0"/>
<dbReference type="OrthoDB" id="9803672at2"/>
<dbReference type="Proteomes" id="UP000001366">
    <property type="component" value="Chromosome"/>
</dbReference>
<dbReference type="GO" id="GO:0015935">
    <property type="term" value="C:small ribosomal subunit"/>
    <property type="evidence" value="ECO:0007669"/>
    <property type="project" value="InterPro"/>
</dbReference>
<dbReference type="GO" id="GO:0019843">
    <property type="term" value="F:rRNA binding"/>
    <property type="evidence" value="ECO:0007669"/>
    <property type="project" value="UniProtKB-UniRule"/>
</dbReference>
<dbReference type="GO" id="GO:0003735">
    <property type="term" value="F:structural constituent of ribosome"/>
    <property type="evidence" value="ECO:0007669"/>
    <property type="project" value="InterPro"/>
</dbReference>
<dbReference type="GO" id="GO:0042274">
    <property type="term" value="P:ribosomal small subunit biogenesis"/>
    <property type="evidence" value="ECO:0007669"/>
    <property type="project" value="TreeGrafter"/>
</dbReference>
<dbReference type="GO" id="GO:0006412">
    <property type="term" value="P:translation"/>
    <property type="evidence" value="ECO:0007669"/>
    <property type="project" value="UniProtKB-UniRule"/>
</dbReference>
<dbReference type="CDD" id="cd00165">
    <property type="entry name" value="S4"/>
    <property type="match status" value="1"/>
</dbReference>
<dbReference type="FunFam" id="3.10.290.10:FF:000001">
    <property type="entry name" value="30S ribosomal protein S4"/>
    <property type="match status" value="1"/>
</dbReference>
<dbReference type="Gene3D" id="1.10.1050.10">
    <property type="entry name" value="Ribosomal Protein S4 Delta 41, Chain A, domain 1"/>
    <property type="match status" value="1"/>
</dbReference>
<dbReference type="Gene3D" id="3.10.290.10">
    <property type="entry name" value="RNA-binding S4 domain"/>
    <property type="match status" value="1"/>
</dbReference>
<dbReference type="HAMAP" id="MF_01306_B">
    <property type="entry name" value="Ribosomal_uS4_B"/>
    <property type="match status" value="1"/>
</dbReference>
<dbReference type="InterPro" id="IPR022801">
    <property type="entry name" value="Ribosomal_uS4"/>
</dbReference>
<dbReference type="InterPro" id="IPR005709">
    <property type="entry name" value="Ribosomal_uS4_bac-type"/>
</dbReference>
<dbReference type="InterPro" id="IPR018079">
    <property type="entry name" value="Ribosomal_uS4_CS"/>
</dbReference>
<dbReference type="InterPro" id="IPR001912">
    <property type="entry name" value="Ribosomal_uS4_N"/>
</dbReference>
<dbReference type="InterPro" id="IPR002942">
    <property type="entry name" value="S4_RNA-bd"/>
</dbReference>
<dbReference type="InterPro" id="IPR036986">
    <property type="entry name" value="S4_RNA-bd_sf"/>
</dbReference>
<dbReference type="NCBIfam" id="NF003717">
    <property type="entry name" value="PRK05327.1"/>
    <property type="match status" value="1"/>
</dbReference>
<dbReference type="NCBIfam" id="TIGR01017">
    <property type="entry name" value="rpsD_bact"/>
    <property type="match status" value="1"/>
</dbReference>
<dbReference type="PANTHER" id="PTHR11831">
    <property type="entry name" value="30S 40S RIBOSOMAL PROTEIN"/>
    <property type="match status" value="1"/>
</dbReference>
<dbReference type="PANTHER" id="PTHR11831:SF4">
    <property type="entry name" value="SMALL RIBOSOMAL SUBUNIT PROTEIN US4M"/>
    <property type="match status" value="1"/>
</dbReference>
<dbReference type="Pfam" id="PF00163">
    <property type="entry name" value="Ribosomal_S4"/>
    <property type="match status" value="1"/>
</dbReference>
<dbReference type="Pfam" id="PF01479">
    <property type="entry name" value="S4"/>
    <property type="match status" value="1"/>
</dbReference>
<dbReference type="SMART" id="SM01390">
    <property type="entry name" value="Ribosomal_S4"/>
    <property type="match status" value="1"/>
</dbReference>
<dbReference type="SMART" id="SM00363">
    <property type="entry name" value="S4"/>
    <property type="match status" value="1"/>
</dbReference>
<dbReference type="SUPFAM" id="SSF55174">
    <property type="entry name" value="Alpha-L RNA-binding motif"/>
    <property type="match status" value="1"/>
</dbReference>
<dbReference type="PROSITE" id="PS00632">
    <property type="entry name" value="RIBOSOMAL_S4"/>
    <property type="match status" value="1"/>
</dbReference>
<dbReference type="PROSITE" id="PS50889">
    <property type="entry name" value="S4"/>
    <property type="match status" value="1"/>
</dbReference>
<evidence type="ECO:0000255" key="1">
    <source>
        <dbReference type="HAMAP-Rule" id="MF_01306"/>
    </source>
</evidence>
<evidence type="ECO:0000305" key="2"/>
<comment type="function">
    <text evidence="1">One of the primary rRNA binding proteins, it binds directly to 16S rRNA where it nucleates assembly of the body of the 30S subunit.</text>
</comment>
<comment type="function">
    <text evidence="1">With S5 and S12 plays an important role in translational accuracy.</text>
</comment>
<comment type="subunit">
    <text evidence="1">Part of the 30S ribosomal subunit. Contacts protein S5. The interaction surface between S4 and S5 is involved in control of translational fidelity.</text>
</comment>
<comment type="similarity">
    <text evidence="1">Belongs to the universal ribosomal protein uS4 family.</text>
</comment>
<gene>
    <name evidence="1" type="primary">rpsD</name>
    <name type="ordered locus">PERMA_1223</name>
</gene>
<protein>
    <recommendedName>
        <fullName evidence="1">Small ribosomal subunit protein uS4</fullName>
    </recommendedName>
    <alternativeName>
        <fullName evidence="2">30S ribosomal protein S4</fullName>
    </alternativeName>
</protein>
<organism>
    <name type="scientific">Persephonella marina (strain DSM 14350 / EX-H1)</name>
    <dbReference type="NCBI Taxonomy" id="123214"/>
    <lineage>
        <taxon>Bacteria</taxon>
        <taxon>Pseudomonadati</taxon>
        <taxon>Aquificota</taxon>
        <taxon>Aquificia</taxon>
        <taxon>Aquificales</taxon>
        <taxon>Hydrogenothermaceae</taxon>
        <taxon>Persephonella</taxon>
    </lineage>
</organism>
<feature type="chain" id="PRO_1000165418" description="Small ribosomal subunit protein uS4">
    <location>
        <begin position="1"/>
        <end position="205"/>
    </location>
</feature>
<feature type="domain" description="S4 RNA-binding" evidence="1">
    <location>
        <begin position="95"/>
        <end position="163"/>
    </location>
</feature>
<reference key="1">
    <citation type="journal article" date="2009" name="J. Bacteriol.">
        <title>Complete and draft genome sequences of six members of the Aquificales.</title>
        <authorList>
            <person name="Reysenbach A.-L."/>
            <person name="Hamamura N."/>
            <person name="Podar M."/>
            <person name="Griffiths E."/>
            <person name="Ferreira S."/>
            <person name="Hochstein R."/>
            <person name="Heidelberg J."/>
            <person name="Johnson J."/>
            <person name="Mead D."/>
            <person name="Pohorille A."/>
            <person name="Sarmiento M."/>
            <person name="Schweighofer K."/>
            <person name="Seshadri R."/>
            <person name="Voytek M.A."/>
        </authorList>
    </citation>
    <scope>NUCLEOTIDE SEQUENCE [LARGE SCALE GENOMIC DNA]</scope>
    <source>
        <strain>DSM 14350 / EX-H1</strain>
    </source>
</reference>
<keyword id="KW-1185">Reference proteome</keyword>
<keyword id="KW-0687">Ribonucleoprotein</keyword>
<keyword id="KW-0689">Ribosomal protein</keyword>
<keyword id="KW-0694">RNA-binding</keyword>
<keyword id="KW-0699">rRNA-binding</keyword>